<organism>
    <name type="scientific">Cupriavidus taiwanensis (strain DSM 17343 / BCRC 17206 / CCUG 44338 / CIP 107171 / LMG 19424 / R1)</name>
    <name type="common">Ralstonia taiwanensis (strain LMG 19424)</name>
    <dbReference type="NCBI Taxonomy" id="977880"/>
    <lineage>
        <taxon>Bacteria</taxon>
        <taxon>Pseudomonadati</taxon>
        <taxon>Pseudomonadota</taxon>
        <taxon>Betaproteobacteria</taxon>
        <taxon>Burkholderiales</taxon>
        <taxon>Burkholderiaceae</taxon>
        <taxon>Cupriavidus</taxon>
    </lineage>
</organism>
<feature type="chain" id="PRO_1000099113" description="GTPase Der">
    <location>
        <begin position="1"/>
        <end position="447"/>
    </location>
</feature>
<feature type="domain" description="EngA-type G 1">
    <location>
        <begin position="3"/>
        <end position="167"/>
    </location>
</feature>
<feature type="domain" description="EngA-type G 2">
    <location>
        <begin position="181"/>
        <end position="354"/>
    </location>
</feature>
<feature type="domain" description="KH-like" evidence="1">
    <location>
        <begin position="355"/>
        <end position="439"/>
    </location>
</feature>
<feature type="binding site" evidence="1">
    <location>
        <begin position="9"/>
        <end position="16"/>
    </location>
    <ligand>
        <name>GTP</name>
        <dbReference type="ChEBI" id="CHEBI:37565"/>
        <label>1</label>
    </ligand>
</feature>
<feature type="binding site" evidence="1">
    <location>
        <begin position="56"/>
        <end position="60"/>
    </location>
    <ligand>
        <name>GTP</name>
        <dbReference type="ChEBI" id="CHEBI:37565"/>
        <label>1</label>
    </ligand>
</feature>
<feature type="binding site" evidence="1">
    <location>
        <begin position="119"/>
        <end position="122"/>
    </location>
    <ligand>
        <name>GTP</name>
        <dbReference type="ChEBI" id="CHEBI:37565"/>
        <label>1</label>
    </ligand>
</feature>
<feature type="binding site" evidence="1">
    <location>
        <begin position="187"/>
        <end position="194"/>
    </location>
    <ligand>
        <name>GTP</name>
        <dbReference type="ChEBI" id="CHEBI:37565"/>
        <label>2</label>
    </ligand>
</feature>
<feature type="binding site" evidence="1">
    <location>
        <begin position="234"/>
        <end position="238"/>
    </location>
    <ligand>
        <name>GTP</name>
        <dbReference type="ChEBI" id="CHEBI:37565"/>
        <label>2</label>
    </ligand>
</feature>
<feature type="binding site" evidence="1">
    <location>
        <begin position="299"/>
        <end position="302"/>
    </location>
    <ligand>
        <name>GTP</name>
        <dbReference type="ChEBI" id="CHEBI:37565"/>
        <label>2</label>
    </ligand>
</feature>
<protein>
    <recommendedName>
        <fullName evidence="1">GTPase Der</fullName>
    </recommendedName>
    <alternativeName>
        <fullName evidence="1">GTP-binding protein EngA</fullName>
    </alternativeName>
</protein>
<comment type="function">
    <text evidence="1">GTPase that plays an essential role in the late steps of ribosome biogenesis.</text>
</comment>
<comment type="subunit">
    <text evidence="1">Associates with the 50S ribosomal subunit.</text>
</comment>
<comment type="similarity">
    <text evidence="1">Belongs to the TRAFAC class TrmE-Era-EngA-EngB-Septin-like GTPase superfamily. EngA (Der) GTPase family.</text>
</comment>
<sequence length="447" mass="49223">MKPVIALVGRPNVGKSTLFNRMTRSRDALVADLPGLTRDRHYGEGRIGERPFIAIDTGGFEPVVKEGIVAEMAKQTKQAVVEADVVIFIVDGRLGLAPQDRAIADYLRKTGRRIMLAVNKAEGMKYTSVAADFYELGMGDPYAISAAHGDGVRELVDEAIELAVQERPELAEEASDEGKGVKIAIVGRPNVGKSTLVNTLIGEERVIAFDMPGTTRDAIYVEFERGGKPYTLIDTAGLRRRGKVFEAIEKFSVVKTLQSIADANVVILLLDAQQDISDQDAHIAGFIVESGRALVVGVNKWDGLDGHTRDRIKHDLERKLQFLSFANFHFVSARERTGIGALMRSVDDAYAAAMVKLPTPQLTRVLQEAVEFQQPKRVGASRPKLRYAHQGGSNPPIIVIHGNALSGVAETYRRYLENRFRAAFKLKGTPLRIEFRTNKNPYADSKD</sequence>
<dbReference type="EMBL" id="CU633749">
    <property type="protein sequence ID" value="CAQ69846.1"/>
    <property type="molecule type" value="Genomic_DNA"/>
</dbReference>
<dbReference type="RefSeq" id="WP_012353159.1">
    <property type="nucleotide sequence ID" value="NC_010528.1"/>
</dbReference>
<dbReference type="SMR" id="B3R1J8"/>
<dbReference type="GeneID" id="29761865"/>
<dbReference type="KEGG" id="cti:RALTA_A1905"/>
<dbReference type="eggNOG" id="COG1160">
    <property type="taxonomic scope" value="Bacteria"/>
</dbReference>
<dbReference type="HOGENOM" id="CLU_016077_6_2_4"/>
<dbReference type="BioCyc" id="CTAI977880:RALTA_RS09185-MONOMER"/>
<dbReference type="Proteomes" id="UP000001692">
    <property type="component" value="Chromosome 1"/>
</dbReference>
<dbReference type="GO" id="GO:0016887">
    <property type="term" value="F:ATP hydrolysis activity"/>
    <property type="evidence" value="ECO:0007669"/>
    <property type="project" value="InterPro"/>
</dbReference>
<dbReference type="GO" id="GO:0005525">
    <property type="term" value="F:GTP binding"/>
    <property type="evidence" value="ECO:0007669"/>
    <property type="project" value="UniProtKB-UniRule"/>
</dbReference>
<dbReference type="GO" id="GO:0043022">
    <property type="term" value="F:ribosome binding"/>
    <property type="evidence" value="ECO:0007669"/>
    <property type="project" value="TreeGrafter"/>
</dbReference>
<dbReference type="GO" id="GO:0042254">
    <property type="term" value="P:ribosome biogenesis"/>
    <property type="evidence" value="ECO:0007669"/>
    <property type="project" value="UniProtKB-KW"/>
</dbReference>
<dbReference type="CDD" id="cd01894">
    <property type="entry name" value="EngA1"/>
    <property type="match status" value="1"/>
</dbReference>
<dbReference type="CDD" id="cd01895">
    <property type="entry name" value="EngA2"/>
    <property type="match status" value="1"/>
</dbReference>
<dbReference type="FunFam" id="3.30.300.20:FF:000004">
    <property type="entry name" value="GTPase Der"/>
    <property type="match status" value="1"/>
</dbReference>
<dbReference type="FunFam" id="3.40.50.300:FF:000040">
    <property type="entry name" value="GTPase Der"/>
    <property type="match status" value="1"/>
</dbReference>
<dbReference type="FunFam" id="3.40.50.300:FF:000057">
    <property type="entry name" value="GTPase Der"/>
    <property type="match status" value="1"/>
</dbReference>
<dbReference type="Gene3D" id="3.30.300.20">
    <property type="match status" value="1"/>
</dbReference>
<dbReference type="Gene3D" id="3.40.50.300">
    <property type="entry name" value="P-loop containing nucleotide triphosphate hydrolases"/>
    <property type="match status" value="2"/>
</dbReference>
<dbReference type="HAMAP" id="MF_00195">
    <property type="entry name" value="GTPase_Der"/>
    <property type="match status" value="1"/>
</dbReference>
<dbReference type="InterPro" id="IPR003593">
    <property type="entry name" value="AAA+_ATPase"/>
</dbReference>
<dbReference type="InterPro" id="IPR031166">
    <property type="entry name" value="G_ENGA"/>
</dbReference>
<dbReference type="InterPro" id="IPR006073">
    <property type="entry name" value="GTP-bd"/>
</dbReference>
<dbReference type="InterPro" id="IPR016484">
    <property type="entry name" value="GTPase_Der"/>
</dbReference>
<dbReference type="InterPro" id="IPR032859">
    <property type="entry name" value="KH_dom-like"/>
</dbReference>
<dbReference type="InterPro" id="IPR015946">
    <property type="entry name" value="KH_dom-like_a/b"/>
</dbReference>
<dbReference type="InterPro" id="IPR027417">
    <property type="entry name" value="P-loop_NTPase"/>
</dbReference>
<dbReference type="InterPro" id="IPR005225">
    <property type="entry name" value="Small_GTP-bd"/>
</dbReference>
<dbReference type="NCBIfam" id="TIGR03594">
    <property type="entry name" value="GTPase_EngA"/>
    <property type="match status" value="1"/>
</dbReference>
<dbReference type="NCBIfam" id="TIGR00231">
    <property type="entry name" value="small_GTP"/>
    <property type="match status" value="2"/>
</dbReference>
<dbReference type="PANTHER" id="PTHR43834">
    <property type="entry name" value="GTPASE DER"/>
    <property type="match status" value="1"/>
</dbReference>
<dbReference type="PANTHER" id="PTHR43834:SF6">
    <property type="entry name" value="GTPASE DER"/>
    <property type="match status" value="1"/>
</dbReference>
<dbReference type="Pfam" id="PF14714">
    <property type="entry name" value="KH_dom-like"/>
    <property type="match status" value="1"/>
</dbReference>
<dbReference type="Pfam" id="PF01926">
    <property type="entry name" value="MMR_HSR1"/>
    <property type="match status" value="2"/>
</dbReference>
<dbReference type="PIRSF" id="PIRSF006485">
    <property type="entry name" value="GTP-binding_EngA"/>
    <property type="match status" value="1"/>
</dbReference>
<dbReference type="PRINTS" id="PR00326">
    <property type="entry name" value="GTP1OBG"/>
</dbReference>
<dbReference type="SMART" id="SM00382">
    <property type="entry name" value="AAA"/>
    <property type="match status" value="2"/>
</dbReference>
<dbReference type="SUPFAM" id="SSF52540">
    <property type="entry name" value="P-loop containing nucleoside triphosphate hydrolases"/>
    <property type="match status" value="2"/>
</dbReference>
<dbReference type="PROSITE" id="PS51712">
    <property type="entry name" value="G_ENGA"/>
    <property type="match status" value="2"/>
</dbReference>
<gene>
    <name evidence="1" type="primary">der</name>
    <name type="synonym">engA</name>
    <name type="ordered locus">RALTA_A1905</name>
</gene>
<reference key="1">
    <citation type="journal article" date="2008" name="Genome Res.">
        <title>Genome sequence of the beta-rhizobium Cupriavidus taiwanensis and comparative genomics of rhizobia.</title>
        <authorList>
            <person name="Amadou C."/>
            <person name="Pascal G."/>
            <person name="Mangenot S."/>
            <person name="Glew M."/>
            <person name="Bontemps C."/>
            <person name="Capela D."/>
            <person name="Carrere S."/>
            <person name="Cruveiller S."/>
            <person name="Dossat C."/>
            <person name="Lajus A."/>
            <person name="Marchetti M."/>
            <person name="Poinsot V."/>
            <person name="Rouy Z."/>
            <person name="Servin B."/>
            <person name="Saad M."/>
            <person name="Schenowitz C."/>
            <person name="Barbe V."/>
            <person name="Batut J."/>
            <person name="Medigue C."/>
            <person name="Masson-Boivin C."/>
        </authorList>
    </citation>
    <scope>NUCLEOTIDE SEQUENCE [LARGE SCALE GENOMIC DNA]</scope>
    <source>
        <strain>DSM 17343 / BCRC 17206 / CCUG 44338 / CIP 107171 / LMG 19424 / R1</strain>
    </source>
</reference>
<evidence type="ECO:0000255" key="1">
    <source>
        <dbReference type="HAMAP-Rule" id="MF_00195"/>
    </source>
</evidence>
<proteinExistence type="inferred from homology"/>
<name>DER_CUPTR</name>
<keyword id="KW-0342">GTP-binding</keyword>
<keyword id="KW-0547">Nucleotide-binding</keyword>
<keyword id="KW-0677">Repeat</keyword>
<keyword id="KW-0690">Ribosome biogenesis</keyword>
<accession>B3R1J8</accession>